<organism>
    <name type="scientific">Edwardsiella ictaluri (strain 93-146)</name>
    <dbReference type="NCBI Taxonomy" id="634503"/>
    <lineage>
        <taxon>Bacteria</taxon>
        <taxon>Pseudomonadati</taxon>
        <taxon>Pseudomonadota</taxon>
        <taxon>Gammaproteobacteria</taxon>
        <taxon>Enterobacterales</taxon>
        <taxon>Hafniaceae</taxon>
        <taxon>Edwardsiella</taxon>
    </lineage>
</organism>
<gene>
    <name evidence="1" type="primary">ileS</name>
    <name type="ordered locus">NT01EI_0679</name>
</gene>
<dbReference type="EC" id="6.1.1.5" evidence="1"/>
<dbReference type="EMBL" id="CP001600">
    <property type="protein sequence ID" value="ACR67901.1"/>
    <property type="molecule type" value="Genomic_DNA"/>
</dbReference>
<dbReference type="RefSeq" id="WP_015870094.1">
    <property type="nucleotide sequence ID" value="NZ_CP169062.1"/>
</dbReference>
<dbReference type="SMR" id="C5B7M4"/>
<dbReference type="STRING" id="67780.B6E78_14050"/>
<dbReference type="GeneID" id="69537745"/>
<dbReference type="KEGG" id="eic:NT01EI_0679"/>
<dbReference type="PATRIC" id="fig|634503.3.peg.611"/>
<dbReference type="HOGENOM" id="CLU_001493_7_1_6"/>
<dbReference type="OrthoDB" id="9810365at2"/>
<dbReference type="Proteomes" id="UP000001485">
    <property type="component" value="Chromosome"/>
</dbReference>
<dbReference type="GO" id="GO:0005829">
    <property type="term" value="C:cytosol"/>
    <property type="evidence" value="ECO:0007669"/>
    <property type="project" value="TreeGrafter"/>
</dbReference>
<dbReference type="GO" id="GO:0002161">
    <property type="term" value="F:aminoacyl-tRNA deacylase activity"/>
    <property type="evidence" value="ECO:0007669"/>
    <property type="project" value="InterPro"/>
</dbReference>
<dbReference type="GO" id="GO:0005524">
    <property type="term" value="F:ATP binding"/>
    <property type="evidence" value="ECO:0007669"/>
    <property type="project" value="UniProtKB-UniRule"/>
</dbReference>
<dbReference type="GO" id="GO:0004822">
    <property type="term" value="F:isoleucine-tRNA ligase activity"/>
    <property type="evidence" value="ECO:0007669"/>
    <property type="project" value="UniProtKB-UniRule"/>
</dbReference>
<dbReference type="GO" id="GO:0000049">
    <property type="term" value="F:tRNA binding"/>
    <property type="evidence" value="ECO:0007669"/>
    <property type="project" value="InterPro"/>
</dbReference>
<dbReference type="GO" id="GO:0008270">
    <property type="term" value="F:zinc ion binding"/>
    <property type="evidence" value="ECO:0007669"/>
    <property type="project" value="UniProtKB-UniRule"/>
</dbReference>
<dbReference type="GO" id="GO:0006428">
    <property type="term" value="P:isoleucyl-tRNA aminoacylation"/>
    <property type="evidence" value="ECO:0007669"/>
    <property type="project" value="UniProtKB-UniRule"/>
</dbReference>
<dbReference type="CDD" id="cd07960">
    <property type="entry name" value="Anticodon_Ia_Ile_BEm"/>
    <property type="match status" value="1"/>
</dbReference>
<dbReference type="CDD" id="cd00818">
    <property type="entry name" value="IleRS_core"/>
    <property type="match status" value="1"/>
</dbReference>
<dbReference type="FunFam" id="1.10.730.20:FF:000001">
    <property type="entry name" value="Isoleucine--tRNA ligase"/>
    <property type="match status" value="1"/>
</dbReference>
<dbReference type="FunFam" id="3.40.50.620:FF:000042">
    <property type="entry name" value="Isoleucine--tRNA ligase"/>
    <property type="match status" value="1"/>
</dbReference>
<dbReference type="FunFam" id="3.40.50.620:FF:000048">
    <property type="entry name" value="Isoleucine--tRNA ligase"/>
    <property type="match status" value="1"/>
</dbReference>
<dbReference type="FunFam" id="3.90.740.10:FF:000002">
    <property type="entry name" value="Isoleucine--tRNA ligase"/>
    <property type="match status" value="1"/>
</dbReference>
<dbReference type="Gene3D" id="1.10.730.20">
    <property type="match status" value="1"/>
</dbReference>
<dbReference type="Gene3D" id="3.40.50.620">
    <property type="entry name" value="HUPs"/>
    <property type="match status" value="2"/>
</dbReference>
<dbReference type="Gene3D" id="3.90.740.10">
    <property type="entry name" value="Valyl/Leucyl/Isoleucyl-tRNA synthetase, editing domain"/>
    <property type="match status" value="1"/>
</dbReference>
<dbReference type="HAMAP" id="MF_02002">
    <property type="entry name" value="Ile_tRNA_synth_type1"/>
    <property type="match status" value="1"/>
</dbReference>
<dbReference type="InterPro" id="IPR001412">
    <property type="entry name" value="aa-tRNA-synth_I_CS"/>
</dbReference>
<dbReference type="InterPro" id="IPR002300">
    <property type="entry name" value="aa-tRNA-synth_Ia"/>
</dbReference>
<dbReference type="InterPro" id="IPR033708">
    <property type="entry name" value="Anticodon_Ile_BEm"/>
</dbReference>
<dbReference type="InterPro" id="IPR002301">
    <property type="entry name" value="Ile-tRNA-ligase"/>
</dbReference>
<dbReference type="InterPro" id="IPR023585">
    <property type="entry name" value="Ile-tRNA-ligase_type1"/>
</dbReference>
<dbReference type="InterPro" id="IPR050081">
    <property type="entry name" value="Ile-tRNA_ligase"/>
</dbReference>
<dbReference type="InterPro" id="IPR013155">
    <property type="entry name" value="M/V/L/I-tRNA-synth_anticd-bd"/>
</dbReference>
<dbReference type="InterPro" id="IPR014729">
    <property type="entry name" value="Rossmann-like_a/b/a_fold"/>
</dbReference>
<dbReference type="InterPro" id="IPR009080">
    <property type="entry name" value="tRNAsynth_Ia_anticodon-bd"/>
</dbReference>
<dbReference type="InterPro" id="IPR009008">
    <property type="entry name" value="Val/Leu/Ile-tRNA-synth_edit"/>
</dbReference>
<dbReference type="InterPro" id="IPR010663">
    <property type="entry name" value="Znf_FPG/IleRS"/>
</dbReference>
<dbReference type="NCBIfam" id="TIGR00392">
    <property type="entry name" value="ileS"/>
    <property type="match status" value="1"/>
</dbReference>
<dbReference type="PANTHER" id="PTHR42765:SF1">
    <property type="entry name" value="ISOLEUCINE--TRNA LIGASE, MITOCHONDRIAL"/>
    <property type="match status" value="1"/>
</dbReference>
<dbReference type="PANTHER" id="PTHR42765">
    <property type="entry name" value="SOLEUCYL-TRNA SYNTHETASE"/>
    <property type="match status" value="1"/>
</dbReference>
<dbReference type="Pfam" id="PF08264">
    <property type="entry name" value="Anticodon_1"/>
    <property type="match status" value="1"/>
</dbReference>
<dbReference type="Pfam" id="PF00133">
    <property type="entry name" value="tRNA-synt_1"/>
    <property type="match status" value="1"/>
</dbReference>
<dbReference type="Pfam" id="PF06827">
    <property type="entry name" value="zf-FPG_IleRS"/>
    <property type="match status" value="1"/>
</dbReference>
<dbReference type="PRINTS" id="PR00984">
    <property type="entry name" value="TRNASYNTHILE"/>
</dbReference>
<dbReference type="SUPFAM" id="SSF47323">
    <property type="entry name" value="Anticodon-binding domain of a subclass of class I aminoacyl-tRNA synthetases"/>
    <property type="match status" value="1"/>
</dbReference>
<dbReference type="SUPFAM" id="SSF52374">
    <property type="entry name" value="Nucleotidylyl transferase"/>
    <property type="match status" value="1"/>
</dbReference>
<dbReference type="SUPFAM" id="SSF50677">
    <property type="entry name" value="ValRS/IleRS/LeuRS editing domain"/>
    <property type="match status" value="1"/>
</dbReference>
<dbReference type="PROSITE" id="PS00178">
    <property type="entry name" value="AA_TRNA_LIGASE_I"/>
    <property type="match status" value="1"/>
</dbReference>
<proteinExistence type="inferred from homology"/>
<keyword id="KW-0030">Aminoacyl-tRNA synthetase</keyword>
<keyword id="KW-0067">ATP-binding</keyword>
<keyword id="KW-0963">Cytoplasm</keyword>
<keyword id="KW-0436">Ligase</keyword>
<keyword id="KW-0479">Metal-binding</keyword>
<keyword id="KW-0547">Nucleotide-binding</keyword>
<keyword id="KW-0648">Protein biosynthesis</keyword>
<keyword id="KW-0862">Zinc</keyword>
<evidence type="ECO:0000255" key="1">
    <source>
        <dbReference type="HAMAP-Rule" id="MF_02002"/>
    </source>
</evidence>
<accession>C5B7M4</accession>
<comment type="function">
    <text evidence="1">Catalyzes the attachment of isoleucine to tRNA(Ile). As IleRS can inadvertently accommodate and process structurally similar amino acids such as valine, to avoid such errors it has two additional distinct tRNA(Ile)-dependent editing activities. One activity is designated as 'pretransfer' editing and involves the hydrolysis of activated Val-AMP. The other activity is designated 'posttransfer' editing and involves deacylation of mischarged Val-tRNA(Ile).</text>
</comment>
<comment type="catalytic activity">
    <reaction evidence="1">
        <text>tRNA(Ile) + L-isoleucine + ATP = L-isoleucyl-tRNA(Ile) + AMP + diphosphate</text>
        <dbReference type="Rhea" id="RHEA:11060"/>
        <dbReference type="Rhea" id="RHEA-COMP:9666"/>
        <dbReference type="Rhea" id="RHEA-COMP:9695"/>
        <dbReference type="ChEBI" id="CHEBI:30616"/>
        <dbReference type="ChEBI" id="CHEBI:33019"/>
        <dbReference type="ChEBI" id="CHEBI:58045"/>
        <dbReference type="ChEBI" id="CHEBI:78442"/>
        <dbReference type="ChEBI" id="CHEBI:78528"/>
        <dbReference type="ChEBI" id="CHEBI:456215"/>
        <dbReference type="EC" id="6.1.1.5"/>
    </reaction>
</comment>
<comment type="cofactor">
    <cofactor evidence="1">
        <name>Zn(2+)</name>
        <dbReference type="ChEBI" id="CHEBI:29105"/>
    </cofactor>
    <text evidence="1">Binds 1 zinc ion per subunit.</text>
</comment>
<comment type="subunit">
    <text evidence="1">Monomer.</text>
</comment>
<comment type="subcellular location">
    <subcellularLocation>
        <location evidence="1">Cytoplasm</location>
    </subcellularLocation>
</comment>
<comment type="domain">
    <text evidence="1">IleRS has two distinct active sites: one for aminoacylation and one for editing. The misactivated valine is translocated from the active site to the editing site, which sterically excludes the correctly activated isoleucine. The single editing site contains two valyl binding pockets, one specific for each substrate (Val-AMP or Val-tRNA(Ile)).</text>
</comment>
<comment type="similarity">
    <text evidence="1">Belongs to the class-I aminoacyl-tRNA synthetase family. IleS type 1 subfamily.</text>
</comment>
<sequence length="948" mass="105791">MSDYKNTLNLPETGFPMRGDLAKREPGMLQHWYEQDLYGIIRNAKQGKKSFILHDGPPYANGSIHIGHSVNKILKDIIIKSKGLSGYDSPYIPGWDCHGLPIELKVEQLIGKPGEKYSAAEFREQCRAYAAEQVAGQKADFIRLGVLGDWEHPYLTMDYGTEANIIRALARIVDNGHLMKGAKPVHWCPDCGSSLAEAEVEYYDKVSPSIDVRFAAVDKAQVLAKFGVSEAKGDVNVVIWTTTPWTLPANRAVALHPELEYQLVQVEGECLILAADLVESVMKRAGIDYWQVLGSCKGEALELLHFCHPFMNFDVPIIMGDHVTLDAGTGAVHTAPGHGPDDYVVGQKYGLEIANPVGSNGCYLPGTHPVLDGLFVFKANDIVIDLLKDSGALLHVEKLTHSYPCCWRHKSPIIFRATPQWFISMDRQGLRSQSLAEIDRIERQGLDEQNLSGWIPAWGKARIESMVANRPDWCISRQRTWGVPMAMLVHKETQELHPRTTELMEMVAKRVEQAGIQAWWDLDIRDLLGDEADQYEKVPDTLDVWFDSGSTSYSVVDARPEFNGHSPDMYLEGSDQHRGWFMSSLMISVAMKGKAPYRQVLTHGFTVDGQGRKMSKSVGNVVSPQQVMNKLGGDILRLWVASTDYTSEMAVSDEILKRSADAYRRIRNTARFLLANLNGFDPCKDMVKPEDMVVLDRWAVGCAKQAQDEIIAAYENYDFHEVVQRLMQFCSVEMGSFYLDIIKDRQYTAKADSVARRSCQTALYHIAEALVRWMAPILSFTADEVWGYLPGDRAQFVFTEEWYQGLFGLDAAEQMNDAFWAELLKVRGEVNRVIEQARNDKKVGGSLEAAITLYADEALATQLDSLQDELRFVLITSAARVQPLVQATADAVASELAGLKVGLGKADGSKCPRCWHYSTAIGQDAAHPQLCPRCVTNVAGQGEERKFA</sequence>
<protein>
    <recommendedName>
        <fullName evidence="1">Isoleucine--tRNA ligase</fullName>
        <ecNumber evidence="1">6.1.1.5</ecNumber>
    </recommendedName>
    <alternativeName>
        <fullName evidence="1">Isoleucyl-tRNA synthetase</fullName>
        <shortName evidence="1">IleRS</shortName>
    </alternativeName>
</protein>
<feature type="chain" id="PRO_1000216235" description="Isoleucine--tRNA ligase">
    <location>
        <begin position="1"/>
        <end position="948"/>
    </location>
</feature>
<feature type="short sequence motif" description="'HIGH' region">
    <location>
        <begin position="58"/>
        <end position="68"/>
    </location>
</feature>
<feature type="short sequence motif" description="'KMSKS' region">
    <location>
        <begin position="613"/>
        <end position="617"/>
    </location>
</feature>
<feature type="binding site" evidence="1">
    <location>
        <position position="572"/>
    </location>
    <ligand>
        <name>L-isoleucyl-5'-AMP</name>
        <dbReference type="ChEBI" id="CHEBI:178002"/>
    </ligand>
</feature>
<feature type="binding site" evidence="1">
    <location>
        <position position="616"/>
    </location>
    <ligand>
        <name>ATP</name>
        <dbReference type="ChEBI" id="CHEBI:30616"/>
    </ligand>
</feature>
<feature type="binding site" evidence="1">
    <location>
        <position position="911"/>
    </location>
    <ligand>
        <name>Zn(2+)</name>
        <dbReference type="ChEBI" id="CHEBI:29105"/>
    </ligand>
</feature>
<feature type="binding site" evidence="1">
    <location>
        <position position="914"/>
    </location>
    <ligand>
        <name>Zn(2+)</name>
        <dbReference type="ChEBI" id="CHEBI:29105"/>
    </ligand>
</feature>
<feature type="binding site" evidence="1">
    <location>
        <position position="931"/>
    </location>
    <ligand>
        <name>Zn(2+)</name>
        <dbReference type="ChEBI" id="CHEBI:29105"/>
    </ligand>
</feature>
<feature type="binding site" evidence="1">
    <location>
        <position position="934"/>
    </location>
    <ligand>
        <name>Zn(2+)</name>
        <dbReference type="ChEBI" id="CHEBI:29105"/>
    </ligand>
</feature>
<name>SYI_EDWI9</name>
<reference key="1">
    <citation type="submission" date="2009-03" db="EMBL/GenBank/DDBJ databases">
        <title>Complete genome sequence of Edwardsiella ictaluri 93-146.</title>
        <authorList>
            <person name="Williams M.L."/>
            <person name="Gillaspy A.F."/>
            <person name="Dyer D.W."/>
            <person name="Thune R.L."/>
            <person name="Waldbieser G.C."/>
            <person name="Schuster S.C."/>
            <person name="Gipson J."/>
            <person name="Zaitshik J."/>
            <person name="Landry C."/>
            <person name="Lawrence M.L."/>
        </authorList>
    </citation>
    <scope>NUCLEOTIDE SEQUENCE [LARGE SCALE GENOMIC DNA]</scope>
    <source>
        <strain>93-146</strain>
    </source>
</reference>